<gene>
    <name type="primary">RALYL</name>
    <name type="synonym">HNRPCL3</name>
</gene>
<comment type="interaction">
    <interactant intactId="EBI-741520">
        <id>Q86SE5</id>
    </interactant>
    <interactant intactId="EBI-8637627">
        <id>Q8WTP8</id>
        <label>AEN</label>
    </interactant>
    <organismsDiffer>false</organismsDiffer>
    <experiments>3</experiments>
</comment>
<comment type="interaction">
    <interactant intactId="EBI-741520">
        <id>Q86SE5</id>
    </interactant>
    <interactant intactId="EBI-358049">
        <id>Q13895</id>
        <label>BYSL</label>
    </interactant>
    <organismsDiffer>false</organismsDiffer>
    <experiments>3</experiments>
</comment>
<comment type="interaction">
    <interactant intactId="EBI-741520">
        <id>Q86SE5</id>
    </interactant>
    <interactant intactId="EBI-357966">
        <id>P07910</id>
        <label>HNRNPC</label>
    </interactant>
    <organismsDiffer>false</organismsDiffer>
    <experiments>7</experiments>
</comment>
<comment type="interaction">
    <interactant intactId="EBI-741520">
        <id>Q86SE5</id>
    </interactant>
    <interactant intactId="EBI-741520">
        <id>Q86SE5</id>
        <label>RALYL</label>
    </interactant>
    <organismsDiffer>false</organismsDiffer>
    <experiments>3</experiments>
</comment>
<comment type="interaction">
    <interactant intactId="EBI-741520">
        <id>Q86SE5</id>
    </interactant>
    <interactant intactId="EBI-740773">
        <id>Q96IZ5</id>
        <label>RBM41</label>
    </interactant>
    <organismsDiffer>false</organismsDiffer>
    <experiments>4</experiments>
</comment>
<comment type="interaction">
    <interactant intactId="EBI-741520">
        <id>Q86SE5</id>
    </interactant>
    <interactant intactId="EBI-741515">
        <id>Q9NVV9</id>
        <label>THAP1</label>
    </interactant>
    <organismsDiffer>false</organismsDiffer>
    <experiments>4</experiments>
</comment>
<comment type="interaction">
    <interactant intactId="EBI-11526555">
        <id>Q86SE5-3</id>
    </interactant>
    <interactant intactId="EBI-1383687">
        <id>Q9UQM7</id>
        <label>CAMK2A</label>
    </interactant>
    <organismsDiffer>false</organismsDiffer>
    <experiments>3</experiments>
</comment>
<comment type="interaction">
    <interactant intactId="EBI-11526555">
        <id>Q86SE5-3</id>
    </interactant>
    <interactant intactId="EBI-357966">
        <id>P07910</id>
        <label>HNRNPC</label>
    </interactant>
    <organismsDiffer>false</organismsDiffer>
    <experiments>3</experiments>
</comment>
<comment type="interaction">
    <interactant intactId="EBI-11526555">
        <id>Q86SE5-3</id>
    </interactant>
    <interactant intactId="EBI-1046507">
        <id>O60812</id>
        <label>HNRNPCL1</label>
    </interactant>
    <organismsDiffer>false</organismsDiffer>
    <experiments>3</experiments>
</comment>
<comment type="interaction">
    <interactant intactId="EBI-11526555">
        <id>Q86SE5-3</id>
    </interactant>
    <interactant intactId="EBI-9512317">
        <id>B2RXH8</id>
        <label>HNRNPCL2</label>
    </interactant>
    <organismsDiffer>false</organismsDiffer>
    <experiments>3</experiments>
</comment>
<comment type="interaction">
    <interactant intactId="EBI-11526555">
        <id>Q86SE5-3</id>
    </interactant>
    <interactant intactId="EBI-9512693">
        <id>Q53GL6</id>
        <label>RALY</label>
    </interactant>
    <organismsDiffer>false</organismsDiffer>
    <experiments>3</experiments>
</comment>
<comment type="interaction">
    <interactant intactId="EBI-11526555">
        <id>Q86SE5-3</id>
    </interactant>
    <interactant intactId="EBI-11526555">
        <id>Q86SE5-3</id>
        <label>RALYL</label>
    </interactant>
    <organismsDiffer>false</organismsDiffer>
    <experiments>3</experiments>
</comment>
<comment type="interaction">
    <interactant intactId="EBI-11526555">
        <id>Q86SE5-3</id>
    </interactant>
    <interactant intactId="EBI-741515">
        <id>Q9NVV9</id>
        <label>THAP1</label>
    </interactant>
    <organismsDiffer>false</organismsDiffer>
    <experiments>6</experiments>
</comment>
<comment type="interaction">
    <interactant intactId="EBI-11526555">
        <id>Q86SE5-3</id>
    </interactant>
    <interactant intactId="EBI-12140557">
        <id>Q6B0B8</id>
        <label>TIGD3</label>
    </interactant>
    <organismsDiffer>false</organismsDiffer>
    <experiments>3</experiments>
</comment>
<comment type="alternative products">
    <event type="alternative splicing"/>
    <isoform>
        <id>Q86SE5-1</id>
        <name>1</name>
        <sequence type="displayed"/>
    </isoform>
    <isoform>
        <id>Q86SE5-2</id>
        <name>2</name>
        <sequence type="described" ref="VSP_027725 VSP_027726"/>
    </isoform>
    <isoform>
        <id>Q86SE5-3</id>
        <name>3</name>
        <sequence type="described" ref="VSP_054067"/>
    </isoform>
</comment>
<comment type="tissue specificity">
    <text evidence="4">Widely expressed, with highest levels in brain.</text>
</comment>
<comment type="similarity">
    <text evidence="7">Belongs to the RRM HNRPC family. RALY subfamily.</text>
</comment>
<comment type="sequence caution" evidence="7">
    <conflict type="erroneous initiation">
        <sequence resource="EMBL-CDS" id="AAH31090"/>
    </conflict>
    <text>Truncated N-terminus.</text>
</comment>
<evidence type="ECO:0000255" key="1"/>
<evidence type="ECO:0000255" key="2">
    <source>
        <dbReference type="PROSITE-ProRule" id="PRU00176"/>
    </source>
</evidence>
<evidence type="ECO:0000256" key="3">
    <source>
        <dbReference type="SAM" id="MobiDB-lite"/>
    </source>
</evidence>
<evidence type="ECO:0000269" key="4">
    <source>
    </source>
</evidence>
<evidence type="ECO:0000303" key="5">
    <source>
    </source>
</evidence>
<evidence type="ECO:0000303" key="6">
    <source>
    </source>
</evidence>
<evidence type="ECO:0000305" key="7"/>
<dbReference type="EMBL" id="AF495529">
    <property type="protein sequence ID" value="AAO85516.1"/>
    <property type="molecule type" value="mRNA"/>
</dbReference>
<dbReference type="EMBL" id="AF495530">
    <property type="protein sequence ID" value="AAO85517.1"/>
    <property type="molecule type" value="mRNA"/>
</dbReference>
<dbReference type="EMBL" id="AK095560">
    <property type="protein sequence ID" value="BAG53084.1"/>
    <property type="molecule type" value="mRNA"/>
</dbReference>
<dbReference type="EMBL" id="AK123437">
    <property type="protein sequence ID" value="BAC85617.1"/>
    <property type="molecule type" value="mRNA"/>
</dbReference>
<dbReference type="EMBL" id="AC009901">
    <property type="status" value="NOT_ANNOTATED_CDS"/>
    <property type="molecule type" value="Genomic_DNA"/>
</dbReference>
<dbReference type="EMBL" id="AC012400">
    <property type="status" value="NOT_ANNOTATED_CDS"/>
    <property type="molecule type" value="Genomic_DNA"/>
</dbReference>
<dbReference type="EMBL" id="AC027043">
    <property type="status" value="NOT_ANNOTATED_CDS"/>
    <property type="molecule type" value="Genomic_DNA"/>
</dbReference>
<dbReference type="EMBL" id="AC087368">
    <property type="status" value="NOT_ANNOTATED_CDS"/>
    <property type="molecule type" value="Genomic_DNA"/>
</dbReference>
<dbReference type="EMBL" id="AC092699">
    <property type="status" value="NOT_ANNOTATED_CDS"/>
    <property type="molecule type" value="Genomic_DNA"/>
</dbReference>
<dbReference type="EMBL" id="AC092709">
    <property type="status" value="NOT_ANNOTATED_CDS"/>
    <property type="molecule type" value="Genomic_DNA"/>
</dbReference>
<dbReference type="EMBL" id="AC103816">
    <property type="status" value="NOT_ANNOTATED_CDS"/>
    <property type="molecule type" value="Genomic_DNA"/>
</dbReference>
<dbReference type="EMBL" id="CH471068">
    <property type="protein sequence ID" value="EAW87118.1"/>
    <property type="molecule type" value="Genomic_DNA"/>
</dbReference>
<dbReference type="EMBL" id="BC031090">
    <property type="protein sequence ID" value="AAH31090.1"/>
    <property type="status" value="ALT_INIT"/>
    <property type="molecule type" value="mRNA"/>
</dbReference>
<dbReference type="CCDS" id="CCDS55252.1">
    <molecule id="Q86SE5-3"/>
</dbReference>
<dbReference type="CCDS" id="CCDS55253.1">
    <molecule id="Q86SE5-1"/>
</dbReference>
<dbReference type="CCDS" id="CCDS75761.1">
    <molecule id="Q86SE5-2"/>
</dbReference>
<dbReference type="RefSeq" id="NP_001093861.1">
    <molecule id="Q86SE5-3"/>
    <property type="nucleotide sequence ID" value="NM_001100391.3"/>
</dbReference>
<dbReference type="RefSeq" id="NP_001093862.1">
    <molecule id="Q86SE5-1"/>
    <property type="nucleotide sequence ID" value="NM_001100392.3"/>
</dbReference>
<dbReference type="RefSeq" id="NP_001093863.1">
    <molecule id="Q86SE5-1"/>
    <property type="nucleotide sequence ID" value="NM_001100393.3"/>
</dbReference>
<dbReference type="RefSeq" id="NP_001274173.1">
    <molecule id="Q86SE5-2"/>
    <property type="nucleotide sequence ID" value="NM_001287244.2"/>
</dbReference>
<dbReference type="RefSeq" id="NP_001341234.1">
    <molecule id="Q86SE5-1"/>
    <property type="nucleotide sequence ID" value="NM_001354305.2"/>
</dbReference>
<dbReference type="RefSeq" id="NP_001341235.1">
    <molecule id="Q86SE5-1"/>
    <property type="nucleotide sequence ID" value="NM_001354306.2"/>
</dbReference>
<dbReference type="RefSeq" id="NP_001341237.1">
    <molecule id="Q86SE5-1"/>
    <property type="nucleotide sequence ID" value="NM_001354308.2"/>
</dbReference>
<dbReference type="RefSeq" id="NP_001341245.1">
    <molecule id="Q86SE5-1"/>
    <property type="nucleotide sequence ID" value="NM_001354316.2"/>
</dbReference>
<dbReference type="RefSeq" id="NP_001341249.1">
    <molecule id="Q86SE5-1"/>
    <property type="nucleotide sequence ID" value="NM_001354320.2"/>
</dbReference>
<dbReference type="RefSeq" id="NP_001341254.1">
    <molecule id="Q86SE5-1"/>
    <property type="nucleotide sequence ID" value="NM_001354325.2"/>
</dbReference>
<dbReference type="RefSeq" id="NP_001400233.1">
    <molecule id="Q86SE5-1"/>
    <property type="nucleotide sequence ID" value="NM_001413304.1"/>
</dbReference>
<dbReference type="RefSeq" id="NP_001400234.1">
    <molecule id="Q86SE5-1"/>
    <property type="nucleotide sequence ID" value="NM_001413305.1"/>
</dbReference>
<dbReference type="RefSeq" id="NP_001400237.1">
    <molecule id="Q86SE5-1"/>
    <property type="nucleotide sequence ID" value="NM_001413308.1"/>
</dbReference>
<dbReference type="RefSeq" id="NP_001400240.1">
    <molecule id="Q86SE5-1"/>
    <property type="nucleotide sequence ID" value="NM_001413311.1"/>
</dbReference>
<dbReference type="RefSeq" id="NP_001400243.1">
    <molecule id="Q86SE5-1"/>
    <property type="nucleotide sequence ID" value="NM_001413314.1"/>
</dbReference>
<dbReference type="RefSeq" id="NP_001400245.1">
    <molecule id="Q86SE5-1"/>
    <property type="nucleotide sequence ID" value="NM_001413316.1"/>
</dbReference>
<dbReference type="RefSeq" id="NP_001400247.1">
    <molecule id="Q86SE5-1"/>
    <property type="nucleotide sequence ID" value="NM_001413318.1"/>
</dbReference>
<dbReference type="RefSeq" id="NP_001400250.1">
    <molecule id="Q86SE5-1"/>
    <property type="nucleotide sequence ID" value="NM_001413321.1"/>
</dbReference>
<dbReference type="RefSeq" id="NP_776247.3">
    <molecule id="Q86SE5-1"/>
    <property type="nucleotide sequence ID" value="NM_173848.5"/>
</dbReference>
<dbReference type="RefSeq" id="XP_016868548.1">
    <property type="nucleotide sequence ID" value="XM_017013059.1"/>
</dbReference>
<dbReference type="RefSeq" id="XP_016868549.1">
    <property type="nucleotide sequence ID" value="XM_017013060.1"/>
</dbReference>
<dbReference type="RefSeq" id="XP_016868550.1">
    <property type="nucleotide sequence ID" value="XM_017013061.1"/>
</dbReference>
<dbReference type="RefSeq" id="XP_016868551.1">
    <property type="nucleotide sequence ID" value="XM_017013062.1"/>
</dbReference>
<dbReference type="RefSeq" id="XP_016868552.1">
    <property type="nucleotide sequence ID" value="XM_017013063.1"/>
</dbReference>
<dbReference type="RefSeq" id="XP_016868553.1">
    <property type="nucleotide sequence ID" value="XM_017013064.1"/>
</dbReference>
<dbReference type="RefSeq" id="XP_016868554.1">
    <property type="nucleotide sequence ID" value="XM_017013065.1"/>
</dbReference>
<dbReference type="SMR" id="Q86SE5"/>
<dbReference type="BioGRID" id="126498">
    <property type="interactions" value="81"/>
</dbReference>
<dbReference type="FunCoup" id="Q86SE5">
    <property type="interactions" value="2256"/>
</dbReference>
<dbReference type="IntAct" id="Q86SE5">
    <property type="interactions" value="46"/>
</dbReference>
<dbReference type="MINT" id="Q86SE5"/>
<dbReference type="STRING" id="9606.ENSP00000430128"/>
<dbReference type="GlyGen" id="Q86SE5">
    <property type="glycosylation" value="1 site, 1 O-linked glycan (1 site)"/>
</dbReference>
<dbReference type="iPTMnet" id="Q86SE5"/>
<dbReference type="PhosphoSitePlus" id="Q86SE5"/>
<dbReference type="BioMuta" id="RALYL"/>
<dbReference type="DMDM" id="158564044"/>
<dbReference type="jPOST" id="Q86SE5"/>
<dbReference type="MassIVE" id="Q86SE5"/>
<dbReference type="PaxDb" id="9606-ENSP00000430128"/>
<dbReference type="PeptideAtlas" id="Q86SE5"/>
<dbReference type="ProteomicsDB" id="32239"/>
<dbReference type="ProteomicsDB" id="69574">
    <molecule id="Q86SE5-1"/>
</dbReference>
<dbReference type="ProteomicsDB" id="69575">
    <molecule id="Q86SE5-2"/>
</dbReference>
<dbReference type="Antibodypedia" id="25367">
    <property type="antibodies" value="133 antibodies from 20 providers"/>
</dbReference>
<dbReference type="DNASU" id="138046"/>
<dbReference type="Ensembl" id="ENST00000517638.5">
    <molecule id="Q86SE5-3"/>
    <property type="protein sequence ID" value="ENSP00000430128.1"/>
    <property type="gene ID" value="ENSG00000184672.12"/>
</dbReference>
<dbReference type="Ensembl" id="ENST00000521268.6">
    <molecule id="Q86SE5-1"/>
    <property type="protein sequence ID" value="ENSP00000430367.1"/>
    <property type="gene ID" value="ENSG00000184672.12"/>
</dbReference>
<dbReference type="Ensembl" id="ENST00000521695.5">
    <molecule id="Q86SE5-1"/>
    <property type="protein sequence ID" value="ENSP00000428667.1"/>
    <property type="gene ID" value="ENSG00000184672.12"/>
</dbReference>
<dbReference type="Ensembl" id="ENST00000522455.5">
    <molecule id="Q86SE5-1"/>
    <property type="protein sequence ID" value="ENSP00000430394.1"/>
    <property type="gene ID" value="ENSG00000184672.12"/>
</dbReference>
<dbReference type="Ensembl" id="ENST00000523850.5">
    <molecule id="Q86SE5-2"/>
    <property type="protein sequence ID" value="ENSP00000428807.1"/>
    <property type="gene ID" value="ENSG00000184672.12"/>
</dbReference>
<dbReference type="GeneID" id="138046"/>
<dbReference type="KEGG" id="hsa:138046"/>
<dbReference type="MANE-Select" id="ENST00000521268.6">
    <property type="protein sequence ID" value="ENSP00000430367.1"/>
    <property type="RefSeq nucleotide sequence ID" value="NM_173848.7"/>
    <property type="RefSeq protein sequence ID" value="NP_776247.3"/>
</dbReference>
<dbReference type="UCSC" id="uc003ycq.5">
    <molecule id="Q86SE5-1"/>
    <property type="organism name" value="human"/>
</dbReference>
<dbReference type="AGR" id="HGNC:27036"/>
<dbReference type="CTD" id="138046"/>
<dbReference type="DisGeNET" id="138046"/>
<dbReference type="GeneCards" id="RALYL"/>
<dbReference type="HGNC" id="HGNC:27036">
    <property type="gene designation" value="RALYL"/>
</dbReference>
<dbReference type="HPA" id="ENSG00000184672">
    <property type="expression patterns" value="Tissue enhanced (adrenal gland, brain, kidney)"/>
</dbReference>
<dbReference type="MIM" id="614648">
    <property type="type" value="gene"/>
</dbReference>
<dbReference type="neXtProt" id="NX_Q86SE5"/>
<dbReference type="OpenTargets" id="ENSG00000184672"/>
<dbReference type="PharmGKB" id="PA162400636"/>
<dbReference type="VEuPathDB" id="HostDB:ENSG00000184672"/>
<dbReference type="eggNOG" id="KOG0118">
    <property type="taxonomic scope" value="Eukaryota"/>
</dbReference>
<dbReference type="GeneTree" id="ENSGT00940000156907"/>
<dbReference type="HOGENOM" id="CLU_079090_2_0_1"/>
<dbReference type="InParanoid" id="Q86SE5"/>
<dbReference type="OrthoDB" id="6730379at2759"/>
<dbReference type="PAN-GO" id="Q86SE5">
    <property type="GO annotations" value="2 GO annotations based on evolutionary models"/>
</dbReference>
<dbReference type="PhylomeDB" id="Q86SE5"/>
<dbReference type="TreeFam" id="TF330974"/>
<dbReference type="PathwayCommons" id="Q86SE5"/>
<dbReference type="SignaLink" id="Q86SE5"/>
<dbReference type="BioGRID-ORCS" id="138046">
    <property type="hits" value="11 hits in 1142 CRISPR screens"/>
</dbReference>
<dbReference type="CD-CODE" id="91857CE7">
    <property type="entry name" value="Nucleolus"/>
</dbReference>
<dbReference type="ChiTaRS" id="RALYL">
    <property type="organism name" value="human"/>
</dbReference>
<dbReference type="GeneWiki" id="RALYL"/>
<dbReference type="GenomeRNAi" id="138046"/>
<dbReference type="Pharos" id="Q86SE5">
    <property type="development level" value="Tbio"/>
</dbReference>
<dbReference type="PRO" id="PR:Q86SE5"/>
<dbReference type="Proteomes" id="UP000005640">
    <property type="component" value="Chromosome 8"/>
</dbReference>
<dbReference type="RNAct" id="Q86SE5">
    <property type="molecule type" value="protein"/>
</dbReference>
<dbReference type="Bgee" id="ENSG00000184672">
    <property type="expression patterns" value="Expressed in endothelial cell and 117 other cell types or tissues"/>
</dbReference>
<dbReference type="ExpressionAtlas" id="Q86SE5">
    <property type="expression patterns" value="baseline and differential"/>
</dbReference>
<dbReference type="GO" id="GO:0005654">
    <property type="term" value="C:nucleoplasm"/>
    <property type="evidence" value="ECO:0000314"/>
    <property type="project" value="HPA"/>
</dbReference>
<dbReference type="GO" id="GO:0005634">
    <property type="term" value="C:nucleus"/>
    <property type="evidence" value="ECO:0000318"/>
    <property type="project" value="GO_Central"/>
</dbReference>
<dbReference type="GO" id="GO:0042802">
    <property type="term" value="F:identical protein binding"/>
    <property type="evidence" value="ECO:0000353"/>
    <property type="project" value="IntAct"/>
</dbReference>
<dbReference type="GO" id="GO:0003723">
    <property type="term" value="F:RNA binding"/>
    <property type="evidence" value="ECO:0007005"/>
    <property type="project" value="UniProtKB"/>
</dbReference>
<dbReference type="FunFam" id="3.30.70.330:FF:000019">
    <property type="entry name" value="heterogeneous nuclear ribonucleoproteins C1/C2 isoform X1"/>
    <property type="match status" value="1"/>
</dbReference>
<dbReference type="Gene3D" id="3.30.70.330">
    <property type="match status" value="1"/>
</dbReference>
<dbReference type="InterPro" id="IPR017347">
    <property type="entry name" value="hnRNP_C"/>
</dbReference>
<dbReference type="InterPro" id="IPR012677">
    <property type="entry name" value="Nucleotide-bd_a/b_plait_sf"/>
</dbReference>
<dbReference type="InterPro" id="IPR035979">
    <property type="entry name" value="RBD_domain_sf"/>
</dbReference>
<dbReference type="InterPro" id="IPR000504">
    <property type="entry name" value="RRM_dom"/>
</dbReference>
<dbReference type="InterPro" id="IPR051186">
    <property type="entry name" value="RRM_HNRPC/RALY_subfam"/>
</dbReference>
<dbReference type="PANTHER" id="PTHR13968">
    <property type="entry name" value="HETEROGENEOUS NUCLEAR RIBONUCLEOPROTEIN"/>
    <property type="match status" value="1"/>
</dbReference>
<dbReference type="PANTHER" id="PTHR13968:SF21">
    <property type="entry name" value="RNA-BINDING RALY-LIKE PROTEIN"/>
    <property type="match status" value="1"/>
</dbReference>
<dbReference type="Pfam" id="PF00076">
    <property type="entry name" value="RRM_1"/>
    <property type="match status" value="1"/>
</dbReference>
<dbReference type="PIRSF" id="PIRSF037992">
    <property type="entry name" value="hnRNP-C_Raly"/>
    <property type="match status" value="1"/>
</dbReference>
<dbReference type="SMART" id="SM00360">
    <property type="entry name" value="RRM"/>
    <property type="match status" value="1"/>
</dbReference>
<dbReference type="SUPFAM" id="SSF54928">
    <property type="entry name" value="RNA-binding domain, RBD"/>
    <property type="match status" value="1"/>
</dbReference>
<dbReference type="PROSITE" id="PS50102">
    <property type="entry name" value="RRM"/>
    <property type="match status" value="1"/>
</dbReference>
<reference key="1">
    <citation type="journal article" date="2003" name="Mol. Biol. Rep.">
        <title>A novel cDNA encodes a putative hRALY-like protein, hRALYL.</title>
        <authorList>
            <person name="Ji C.N."/>
            <person name="Chen J.Z."/>
            <person name="Xie Y."/>
            <person name="Wang S."/>
            <person name="Qian J."/>
            <person name="Zhao E."/>
            <person name="Jin W."/>
            <person name="Wu X.Z."/>
            <person name="Xu W.X."/>
            <person name="Ying K."/>
            <person name="Mao Y.M."/>
        </authorList>
    </citation>
    <scope>NUCLEOTIDE SEQUENCE [MRNA] (ISOFORM 1)</scope>
    <scope>TISSUE SPECIFICITY</scope>
</reference>
<reference key="2">
    <citation type="journal article" date="2004" name="Nat. Genet.">
        <title>Complete sequencing and characterization of 21,243 full-length human cDNAs.</title>
        <authorList>
            <person name="Ota T."/>
            <person name="Suzuki Y."/>
            <person name="Nishikawa T."/>
            <person name="Otsuki T."/>
            <person name="Sugiyama T."/>
            <person name="Irie R."/>
            <person name="Wakamatsu A."/>
            <person name="Hayashi K."/>
            <person name="Sato H."/>
            <person name="Nagai K."/>
            <person name="Kimura K."/>
            <person name="Makita H."/>
            <person name="Sekine M."/>
            <person name="Obayashi M."/>
            <person name="Nishi T."/>
            <person name="Shibahara T."/>
            <person name="Tanaka T."/>
            <person name="Ishii S."/>
            <person name="Yamamoto J."/>
            <person name="Saito K."/>
            <person name="Kawai Y."/>
            <person name="Isono Y."/>
            <person name="Nakamura Y."/>
            <person name="Nagahari K."/>
            <person name="Murakami K."/>
            <person name="Yasuda T."/>
            <person name="Iwayanagi T."/>
            <person name="Wagatsuma M."/>
            <person name="Shiratori A."/>
            <person name="Sudo H."/>
            <person name="Hosoiri T."/>
            <person name="Kaku Y."/>
            <person name="Kodaira H."/>
            <person name="Kondo H."/>
            <person name="Sugawara M."/>
            <person name="Takahashi M."/>
            <person name="Kanda K."/>
            <person name="Yokoi T."/>
            <person name="Furuya T."/>
            <person name="Kikkawa E."/>
            <person name="Omura Y."/>
            <person name="Abe K."/>
            <person name="Kamihara K."/>
            <person name="Katsuta N."/>
            <person name="Sato K."/>
            <person name="Tanikawa M."/>
            <person name="Yamazaki M."/>
            <person name="Ninomiya K."/>
            <person name="Ishibashi T."/>
            <person name="Yamashita H."/>
            <person name="Murakawa K."/>
            <person name="Fujimori K."/>
            <person name="Tanai H."/>
            <person name="Kimata M."/>
            <person name="Watanabe M."/>
            <person name="Hiraoka S."/>
            <person name="Chiba Y."/>
            <person name="Ishida S."/>
            <person name="Ono Y."/>
            <person name="Takiguchi S."/>
            <person name="Watanabe S."/>
            <person name="Yosida M."/>
            <person name="Hotuta T."/>
            <person name="Kusano J."/>
            <person name="Kanehori K."/>
            <person name="Takahashi-Fujii A."/>
            <person name="Hara H."/>
            <person name="Tanase T.-O."/>
            <person name="Nomura Y."/>
            <person name="Togiya S."/>
            <person name="Komai F."/>
            <person name="Hara R."/>
            <person name="Takeuchi K."/>
            <person name="Arita M."/>
            <person name="Imose N."/>
            <person name="Musashino K."/>
            <person name="Yuuki H."/>
            <person name="Oshima A."/>
            <person name="Sasaki N."/>
            <person name="Aotsuka S."/>
            <person name="Yoshikawa Y."/>
            <person name="Matsunawa H."/>
            <person name="Ichihara T."/>
            <person name="Shiohata N."/>
            <person name="Sano S."/>
            <person name="Moriya S."/>
            <person name="Momiyama H."/>
            <person name="Satoh N."/>
            <person name="Takami S."/>
            <person name="Terashima Y."/>
            <person name="Suzuki O."/>
            <person name="Nakagawa S."/>
            <person name="Senoh A."/>
            <person name="Mizoguchi H."/>
            <person name="Goto Y."/>
            <person name="Shimizu F."/>
            <person name="Wakebe H."/>
            <person name="Hishigaki H."/>
            <person name="Watanabe T."/>
            <person name="Sugiyama A."/>
            <person name="Takemoto M."/>
            <person name="Kawakami B."/>
            <person name="Yamazaki M."/>
            <person name="Watanabe K."/>
            <person name="Kumagai A."/>
            <person name="Itakura S."/>
            <person name="Fukuzumi Y."/>
            <person name="Fujimori Y."/>
            <person name="Komiyama M."/>
            <person name="Tashiro H."/>
            <person name="Tanigami A."/>
            <person name="Fujiwara T."/>
            <person name="Ono T."/>
            <person name="Yamada K."/>
            <person name="Fujii Y."/>
            <person name="Ozaki K."/>
            <person name="Hirao M."/>
            <person name="Ohmori Y."/>
            <person name="Kawabata A."/>
            <person name="Hikiji T."/>
            <person name="Kobatake N."/>
            <person name="Inagaki H."/>
            <person name="Ikema Y."/>
            <person name="Okamoto S."/>
            <person name="Okitani R."/>
            <person name="Kawakami T."/>
            <person name="Noguchi S."/>
            <person name="Itoh T."/>
            <person name="Shigeta K."/>
            <person name="Senba T."/>
            <person name="Matsumura K."/>
            <person name="Nakajima Y."/>
            <person name="Mizuno T."/>
            <person name="Morinaga M."/>
            <person name="Sasaki M."/>
            <person name="Togashi T."/>
            <person name="Oyama M."/>
            <person name="Hata H."/>
            <person name="Watanabe M."/>
            <person name="Komatsu T."/>
            <person name="Mizushima-Sugano J."/>
            <person name="Satoh T."/>
            <person name="Shirai Y."/>
            <person name="Takahashi Y."/>
            <person name="Nakagawa K."/>
            <person name="Okumura K."/>
            <person name="Nagase T."/>
            <person name="Nomura N."/>
            <person name="Kikuchi H."/>
            <person name="Masuho Y."/>
            <person name="Yamashita R."/>
            <person name="Nakai K."/>
            <person name="Yada T."/>
            <person name="Nakamura Y."/>
            <person name="Ohara O."/>
            <person name="Isogai T."/>
            <person name="Sugano S."/>
        </authorList>
    </citation>
    <scope>NUCLEOTIDE SEQUENCE [LARGE SCALE MRNA] (ISOFORMS 1 AND 2)</scope>
    <source>
        <tissue>Brain</tissue>
        <tissue>Subthalamic nucleus</tissue>
    </source>
</reference>
<reference key="3">
    <citation type="journal article" date="2006" name="Nature">
        <title>DNA sequence and analysis of human chromosome 8.</title>
        <authorList>
            <person name="Nusbaum C."/>
            <person name="Mikkelsen T.S."/>
            <person name="Zody M.C."/>
            <person name="Asakawa S."/>
            <person name="Taudien S."/>
            <person name="Garber M."/>
            <person name="Kodira C.D."/>
            <person name="Schueler M.G."/>
            <person name="Shimizu A."/>
            <person name="Whittaker C.A."/>
            <person name="Chang J.L."/>
            <person name="Cuomo C.A."/>
            <person name="Dewar K."/>
            <person name="FitzGerald M.G."/>
            <person name="Yang X."/>
            <person name="Allen N.R."/>
            <person name="Anderson S."/>
            <person name="Asakawa T."/>
            <person name="Blechschmidt K."/>
            <person name="Bloom T."/>
            <person name="Borowsky M.L."/>
            <person name="Butler J."/>
            <person name="Cook A."/>
            <person name="Corum B."/>
            <person name="DeArellano K."/>
            <person name="DeCaprio D."/>
            <person name="Dooley K.T."/>
            <person name="Dorris L. III"/>
            <person name="Engels R."/>
            <person name="Gloeckner G."/>
            <person name="Hafez N."/>
            <person name="Hagopian D.S."/>
            <person name="Hall J.L."/>
            <person name="Ishikawa S.K."/>
            <person name="Jaffe D.B."/>
            <person name="Kamat A."/>
            <person name="Kudoh J."/>
            <person name="Lehmann R."/>
            <person name="Lokitsang T."/>
            <person name="Macdonald P."/>
            <person name="Major J.E."/>
            <person name="Matthews C.D."/>
            <person name="Mauceli E."/>
            <person name="Menzel U."/>
            <person name="Mihalev A.H."/>
            <person name="Minoshima S."/>
            <person name="Murayama Y."/>
            <person name="Naylor J.W."/>
            <person name="Nicol R."/>
            <person name="Nguyen C."/>
            <person name="O'Leary S.B."/>
            <person name="O'Neill K."/>
            <person name="Parker S.C.J."/>
            <person name="Polley A."/>
            <person name="Raymond C.K."/>
            <person name="Reichwald K."/>
            <person name="Rodriguez J."/>
            <person name="Sasaki T."/>
            <person name="Schilhabel M."/>
            <person name="Siddiqui R."/>
            <person name="Smith C.L."/>
            <person name="Sneddon T.P."/>
            <person name="Talamas J.A."/>
            <person name="Tenzin P."/>
            <person name="Topham K."/>
            <person name="Venkataraman V."/>
            <person name="Wen G."/>
            <person name="Yamazaki S."/>
            <person name="Young S.K."/>
            <person name="Zeng Q."/>
            <person name="Zimmer A.R."/>
            <person name="Rosenthal A."/>
            <person name="Birren B.W."/>
            <person name="Platzer M."/>
            <person name="Shimizu N."/>
            <person name="Lander E.S."/>
        </authorList>
    </citation>
    <scope>NUCLEOTIDE SEQUENCE [LARGE SCALE GENOMIC DNA]</scope>
</reference>
<reference key="4">
    <citation type="submission" date="2005-07" db="EMBL/GenBank/DDBJ databases">
        <authorList>
            <person name="Mural R.J."/>
            <person name="Istrail S."/>
            <person name="Sutton G.G."/>
            <person name="Florea L."/>
            <person name="Halpern A.L."/>
            <person name="Mobarry C.M."/>
            <person name="Lippert R."/>
            <person name="Walenz B."/>
            <person name="Shatkay H."/>
            <person name="Dew I."/>
            <person name="Miller J.R."/>
            <person name="Flanigan M.J."/>
            <person name="Edwards N.J."/>
            <person name="Bolanos R."/>
            <person name="Fasulo D."/>
            <person name="Halldorsson B.V."/>
            <person name="Hannenhalli S."/>
            <person name="Turner R."/>
            <person name="Yooseph S."/>
            <person name="Lu F."/>
            <person name="Nusskern D.R."/>
            <person name="Shue B.C."/>
            <person name="Zheng X.H."/>
            <person name="Zhong F."/>
            <person name="Delcher A.L."/>
            <person name="Huson D.H."/>
            <person name="Kravitz S.A."/>
            <person name="Mouchard L."/>
            <person name="Reinert K."/>
            <person name="Remington K.A."/>
            <person name="Clark A.G."/>
            <person name="Waterman M.S."/>
            <person name="Eichler E.E."/>
            <person name="Adams M.D."/>
            <person name="Hunkapiller M.W."/>
            <person name="Myers E.W."/>
            <person name="Venter J.C."/>
        </authorList>
    </citation>
    <scope>NUCLEOTIDE SEQUENCE [LARGE SCALE GENOMIC DNA]</scope>
</reference>
<reference key="5">
    <citation type="journal article" date="2004" name="Genome Res.">
        <title>The status, quality, and expansion of the NIH full-length cDNA project: the Mammalian Gene Collection (MGC).</title>
        <authorList>
            <consortium name="The MGC Project Team"/>
        </authorList>
    </citation>
    <scope>NUCLEOTIDE SEQUENCE [LARGE SCALE MRNA] (ISOFORM 3)</scope>
    <source>
        <tissue>Brain</tissue>
    </source>
</reference>
<protein>
    <recommendedName>
        <fullName>RNA-binding Raly-like protein</fullName>
        <shortName>hRALYL</shortName>
    </recommendedName>
    <alternativeName>
        <fullName>Heterogeneous nuclear ribonucleoprotein C-like 3</fullName>
        <shortName>hnRNP core protein C-like 3</shortName>
    </alternativeName>
</protein>
<organism>
    <name type="scientific">Homo sapiens</name>
    <name type="common">Human</name>
    <dbReference type="NCBI Taxonomy" id="9606"/>
    <lineage>
        <taxon>Eukaryota</taxon>
        <taxon>Metazoa</taxon>
        <taxon>Chordata</taxon>
        <taxon>Craniata</taxon>
        <taxon>Vertebrata</taxon>
        <taxon>Euteleostomi</taxon>
        <taxon>Mammalia</taxon>
        <taxon>Eutheria</taxon>
        <taxon>Euarchontoglires</taxon>
        <taxon>Primates</taxon>
        <taxon>Haplorrhini</taxon>
        <taxon>Catarrhini</taxon>
        <taxon>Hominidae</taxon>
        <taxon>Homo</taxon>
    </lineage>
</organism>
<name>RALYL_HUMAN</name>
<keyword id="KW-0025">Alternative splicing</keyword>
<keyword id="KW-0175">Coiled coil</keyword>
<keyword id="KW-1267">Proteomics identification</keyword>
<keyword id="KW-1185">Reference proteome</keyword>
<keyword id="KW-0694">RNA-binding</keyword>
<sequence>MTGKTQTSNVTNKNDPKSINSRVFIGNLNTAIVKKVDIEAIFSKYGKIVGCSVHKGYAFVQYMSERHARAAVAGENARVIAGQPLDINMAGEPKPYRPKPGNKRPLSALYRLESKEPFLSVGGYVFDYDYYRDDFYNRLFDYHGRVPPPPRAVIPLKRPRVAVTTTRRGKGVFSMKGGSRSTASGSTGSKLKSDELQTIKKELTQIKTKIDSLLGRLEKIEKQQKAEAEAQKKQLEESLVLIQEECVSEIADHSTEEPAEGGPDADGEEMTDGIEEDFDEDGGHELFLQIK</sequence>
<accession>Q86SE5</accession>
<accession>B3KTH2</accession>
<accession>G3V129</accession>
<accession>Q6ZW87</accession>
<accession>Q8N1C2</accession>
<feature type="chain" id="PRO_0000299525" description="RNA-binding Raly-like protein">
    <location>
        <begin position="1"/>
        <end position="291"/>
    </location>
</feature>
<feature type="domain" description="RRM" evidence="2">
    <location>
        <begin position="21"/>
        <end position="92"/>
    </location>
</feature>
<feature type="region of interest" description="Disordered" evidence="3">
    <location>
        <begin position="171"/>
        <end position="192"/>
    </location>
</feature>
<feature type="region of interest" description="Disordered" evidence="3">
    <location>
        <begin position="249"/>
        <end position="291"/>
    </location>
</feature>
<feature type="coiled-coil region" evidence="1">
    <location>
        <begin position="190"/>
        <end position="249"/>
    </location>
</feature>
<feature type="compositionally biased region" description="Low complexity" evidence="3">
    <location>
        <begin position="177"/>
        <end position="189"/>
    </location>
</feature>
<feature type="compositionally biased region" description="Acidic residues" evidence="3">
    <location>
        <begin position="257"/>
        <end position="282"/>
    </location>
</feature>
<feature type="splice variant" id="VSP_027725" description="In isoform 2." evidence="5">
    <location>
        <begin position="1"/>
        <end position="73"/>
    </location>
</feature>
<feature type="splice variant" id="VSP_054067" description="In isoform 3." evidence="6">
    <original>M</original>
    <variation>MSKRRRLKQGEPIM</variation>
    <location>
        <position position="1"/>
    </location>
</feature>
<feature type="splice variant" id="VSP_027726" description="In isoform 2." evidence="5">
    <original>GENARVIAGQPLD</original>
    <variation>MTMYKSKRRHQRY</variation>
    <location>
        <begin position="74"/>
        <end position="86"/>
    </location>
</feature>
<feature type="sequence conflict" description="In Ref. 1; AAO85516/AAO85517." evidence="7" ref="1">
    <original>Y</original>
    <variation>F</variation>
    <location>
        <position position="142"/>
    </location>
</feature>
<proteinExistence type="evidence at protein level"/>